<dbReference type="EMBL" id="CP000381">
    <property type="protein sequence ID" value="ABX74183.1"/>
    <property type="molecule type" value="Genomic_DNA"/>
</dbReference>
<dbReference type="RefSeq" id="WP_012222156.1">
    <property type="nucleotide sequence ID" value="NC_010120.1"/>
</dbReference>
<dbReference type="SMR" id="A9M489"/>
<dbReference type="KEGG" id="nmn:NMCC_2065"/>
<dbReference type="HOGENOM" id="CLU_040318_2_1_4"/>
<dbReference type="Proteomes" id="UP000001177">
    <property type="component" value="Chromosome"/>
</dbReference>
<dbReference type="GO" id="GO:0022627">
    <property type="term" value="C:cytosolic small ribosomal subunit"/>
    <property type="evidence" value="ECO:0007669"/>
    <property type="project" value="TreeGrafter"/>
</dbReference>
<dbReference type="GO" id="GO:0003735">
    <property type="term" value="F:structural constituent of ribosome"/>
    <property type="evidence" value="ECO:0007669"/>
    <property type="project" value="InterPro"/>
</dbReference>
<dbReference type="GO" id="GO:0006412">
    <property type="term" value="P:translation"/>
    <property type="evidence" value="ECO:0007669"/>
    <property type="project" value="UniProtKB-UniRule"/>
</dbReference>
<dbReference type="CDD" id="cd01425">
    <property type="entry name" value="RPS2"/>
    <property type="match status" value="1"/>
</dbReference>
<dbReference type="FunFam" id="1.10.287.610:FF:000004">
    <property type="entry name" value="30S ribosomal protein S2"/>
    <property type="match status" value="1"/>
</dbReference>
<dbReference type="Gene3D" id="3.40.50.10490">
    <property type="entry name" value="Glucose-6-phosphate isomerase like protein, domain 1"/>
    <property type="match status" value="1"/>
</dbReference>
<dbReference type="Gene3D" id="1.10.287.610">
    <property type="entry name" value="Helix hairpin bin"/>
    <property type="match status" value="1"/>
</dbReference>
<dbReference type="HAMAP" id="MF_00291_B">
    <property type="entry name" value="Ribosomal_uS2_B"/>
    <property type="match status" value="1"/>
</dbReference>
<dbReference type="InterPro" id="IPR001865">
    <property type="entry name" value="Ribosomal_uS2"/>
</dbReference>
<dbReference type="InterPro" id="IPR005706">
    <property type="entry name" value="Ribosomal_uS2_bac/mit/plastid"/>
</dbReference>
<dbReference type="InterPro" id="IPR018130">
    <property type="entry name" value="Ribosomal_uS2_CS"/>
</dbReference>
<dbReference type="InterPro" id="IPR023591">
    <property type="entry name" value="Ribosomal_uS2_flav_dom_sf"/>
</dbReference>
<dbReference type="NCBIfam" id="TIGR01011">
    <property type="entry name" value="rpsB_bact"/>
    <property type="match status" value="1"/>
</dbReference>
<dbReference type="PANTHER" id="PTHR12534">
    <property type="entry name" value="30S RIBOSOMAL PROTEIN S2 PROKARYOTIC AND ORGANELLAR"/>
    <property type="match status" value="1"/>
</dbReference>
<dbReference type="PANTHER" id="PTHR12534:SF0">
    <property type="entry name" value="SMALL RIBOSOMAL SUBUNIT PROTEIN US2M"/>
    <property type="match status" value="1"/>
</dbReference>
<dbReference type="Pfam" id="PF00318">
    <property type="entry name" value="Ribosomal_S2"/>
    <property type="match status" value="1"/>
</dbReference>
<dbReference type="PRINTS" id="PR00395">
    <property type="entry name" value="RIBOSOMALS2"/>
</dbReference>
<dbReference type="SUPFAM" id="SSF52313">
    <property type="entry name" value="Ribosomal protein S2"/>
    <property type="match status" value="1"/>
</dbReference>
<dbReference type="PROSITE" id="PS00962">
    <property type="entry name" value="RIBOSOMAL_S2_1"/>
    <property type="match status" value="1"/>
</dbReference>
<sequence length="242" mass="26929">MSQITMRQMIEAGVHFGHQTRFWNPKMAQYIFGARNKIHIVNLEKTLPMFQDAQEAVRRLVANKGTVLFVGTKRQARDIIREEATRAGMPFVDYRWLGGMLTNYKTVKQSIKRLEEKTAALENAAESGFSKKEILEMQRDVEKLERSLGGIKNMKGLPDAIFVIDTGYQKGTLVETEKLGIPVIAVVDTNNSPDGVKYVIPGNDDSAKAIRLYCRGIADAVLEGKNQALQETVAAAQEAAAE</sequence>
<feature type="chain" id="PRO_1000078888" description="Small ribosomal subunit protein uS2">
    <location>
        <begin position="1"/>
        <end position="242"/>
    </location>
</feature>
<name>RS2_NEIM0</name>
<reference key="1">
    <citation type="journal article" date="2008" name="Genomics">
        <title>Characterization of ST-4821 complex, a unique Neisseria meningitidis clone.</title>
        <authorList>
            <person name="Peng J."/>
            <person name="Yang L."/>
            <person name="Yang F."/>
            <person name="Yang J."/>
            <person name="Yan Y."/>
            <person name="Nie H."/>
            <person name="Zhang X."/>
            <person name="Xiong Z."/>
            <person name="Jiang Y."/>
            <person name="Cheng F."/>
            <person name="Xu X."/>
            <person name="Chen S."/>
            <person name="Sun L."/>
            <person name="Li W."/>
            <person name="Shen Y."/>
            <person name="Shao Z."/>
            <person name="Liang X."/>
            <person name="Xu J."/>
            <person name="Jin Q."/>
        </authorList>
    </citation>
    <scope>NUCLEOTIDE SEQUENCE [LARGE SCALE GENOMIC DNA]</scope>
    <source>
        <strain>053442</strain>
    </source>
</reference>
<organism>
    <name type="scientific">Neisseria meningitidis serogroup C (strain 053442)</name>
    <dbReference type="NCBI Taxonomy" id="374833"/>
    <lineage>
        <taxon>Bacteria</taxon>
        <taxon>Pseudomonadati</taxon>
        <taxon>Pseudomonadota</taxon>
        <taxon>Betaproteobacteria</taxon>
        <taxon>Neisseriales</taxon>
        <taxon>Neisseriaceae</taxon>
        <taxon>Neisseria</taxon>
    </lineage>
</organism>
<proteinExistence type="inferred from homology"/>
<evidence type="ECO:0000255" key="1">
    <source>
        <dbReference type="HAMAP-Rule" id="MF_00291"/>
    </source>
</evidence>
<evidence type="ECO:0000305" key="2"/>
<accession>A9M489</accession>
<comment type="similarity">
    <text evidence="1">Belongs to the universal ribosomal protein uS2 family.</text>
</comment>
<gene>
    <name evidence="1" type="primary">rpsB</name>
    <name type="ordered locus">NMCC_2065</name>
</gene>
<keyword id="KW-0687">Ribonucleoprotein</keyword>
<keyword id="KW-0689">Ribosomal protein</keyword>
<protein>
    <recommendedName>
        <fullName evidence="1">Small ribosomal subunit protein uS2</fullName>
    </recommendedName>
    <alternativeName>
        <fullName evidence="2">30S ribosomal protein S2</fullName>
    </alternativeName>
</protein>